<proteinExistence type="inferred from homology"/>
<organism>
    <name type="scientific">Prochlorococcus marinus (strain MIT 9211)</name>
    <dbReference type="NCBI Taxonomy" id="93059"/>
    <lineage>
        <taxon>Bacteria</taxon>
        <taxon>Bacillati</taxon>
        <taxon>Cyanobacteriota</taxon>
        <taxon>Cyanophyceae</taxon>
        <taxon>Synechococcales</taxon>
        <taxon>Prochlorococcaceae</taxon>
        <taxon>Prochlorococcus</taxon>
    </lineage>
</organism>
<feature type="chain" id="PRO_0000384733" description="Ribosome maturation factor RimP">
    <location>
        <begin position="1"/>
        <end position="155"/>
    </location>
</feature>
<name>RIMP_PROM4</name>
<gene>
    <name evidence="1" type="primary">rimP</name>
    <name type="ordered locus">P9211_16131</name>
</gene>
<comment type="function">
    <text evidence="1">Required for maturation of 30S ribosomal subunits.</text>
</comment>
<comment type="subcellular location">
    <subcellularLocation>
        <location evidence="1">Cytoplasm</location>
    </subcellularLocation>
</comment>
<comment type="similarity">
    <text evidence="1">Belongs to the RimP family.</text>
</comment>
<comment type="sequence caution" evidence="2">
    <conflict type="erroneous initiation">
        <sequence resource="EMBL-CDS" id="ABX09544"/>
    </conflict>
</comment>
<keyword id="KW-0963">Cytoplasm</keyword>
<keyword id="KW-1185">Reference proteome</keyword>
<keyword id="KW-0690">Ribosome biogenesis</keyword>
<protein>
    <recommendedName>
        <fullName evidence="1">Ribosome maturation factor RimP</fullName>
    </recommendedName>
</protein>
<dbReference type="EMBL" id="CP000878">
    <property type="protein sequence ID" value="ABX09544.1"/>
    <property type="status" value="ALT_INIT"/>
    <property type="molecule type" value="Genomic_DNA"/>
</dbReference>
<dbReference type="RefSeq" id="WP_041391231.1">
    <property type="nucleotide sequence ID" value="NC_009976.1"/>
</dbReference>
<dbReference type="SMR" id="A9BCI2"/>
<dbReference type="STRING" id="93059.P9211_16131"/>
<dbReference type="KEGG" id="pmj:P9211_16131"/>
<dbReference type="eggNOG" id="COG0779">
    <property type="taxonomic scope" value="Bacteria"/>
</dbReference>
<dbReference type="HOGENOM" id="CLU_070525_2_1_3"/>
<dbReference type="OrthoDB" id="9805006at2"/>
<dbReference type="Proteomes" id="UP000000788">
    <property type="component" value="Chromosome"/>
</dbReference>
<dbReference type="GO" id="GO:0005829">
    <property type="term" value="C:cytosol"/>
    <property type="evidence" value="ECO:0007669"/>
    <property type="project" value="TreeGrafter"/>
</dbReference>
<dbReference type="GO" id="GO:0000028">
    <property type="term" value="P:ribosomal small subunit assembly"/>
    <property type="evidence" value="ECO:0007669"/>
    <property type="project" value="TreeGrafter"/>
</dbReference>
<dbReference type="GO" id="GO:0006412">
    <property type="term" value="P:translation"/>
    <property type="evidence" value="ECO:0007669"/>
    <property type="project" value="TreeGrafter"/>
</dbReference>
<dbReference type="Gene3D" id="3.30.300.70">
    <property type="entry name" value="RimP-like superfamily, N-terminal"/>
    <property type="match status" value="1"/>
</dbReference>
<dbReference type="HAMAP" id="MF_01077">
    <property type="entry name" value="RimP"/>
    <property type="match status" value="1"/>
</dbReference>
<dbReference type="InterPro" id="IPR003728">
    <property type="entry name" value="Ribosome_maturation_RimP"/>
</dbReference>
<dbReference type="InterPro" id="IPR036847">
    <property type="entry name" value="RimP_C_sf"/>
</dbReference>
<dbReference type="InterPro" id="IPR028989">
    <property type="entry name" value="RimP_N"/>
</dbReference>
<dbReference type="InterPro" id="IPR035956">
    <property type="entry name" value="RimP_N_sf"/>
</dbReference>
<dbReference type="PANTHER" id="PTHR33867">
    <property type="entry name" value="RIBOSOME MATURATION FACTOR RIMP"/>
    <property type="match status" value="1"/>
</dbReference>
<dbReference type="PANTHER" id="PTHR33867:SF1">
    <property type="entry name" value="RIBOSOME MATURATION FACTOR RIMP"/>
    <property type="match status" value="1"/>
</dbReference>
<dbReference type="Pfam" id="PF02576">
    <property type="entry name" value="RimP_N"/>
    <property type="match status" value="1"/>
</dbReference>
<dbReference type="SUPFAM" id="SSF74942">
    <property type="entry name" value="YhbC-like, C-terminal domain"/>
    <property type="match status" value="1"/>
</dbReference>
<dbReference type="SUPFAM" id="SSF75420">
    <property type="entry name" value="YhbC-like, N-terminal domain"/>
    <property type="match status" value="1"/>
</dbReference>
<evidence type="ECO:0000255" key="1">
    <source>
        <dbReference type="HAMAP-Rule" id="MF_01077"/>
    </source>
</evidence>
<evidence type="ECO:0000305" key="2"/>
<accession>A9BCI2</accession>
<sequence length="155" mass="17306">MSNPIVTSLKILASNTAADKGLEVVELKFNPHSKPITIQVQIQKKPKKDVSLDDCAQFSELISETIELSKLINEPYLLEISSPGLGDLLQTDKDFKTFKGFPIEVLFKNNENTKLTKSGLLHERSKEYLLINIKGRISKIPREDVITVQLTSPTG</sequence>
<reference key="1">
    <citation type="journal article" date="2007" name="PLoS Genet.">
        <title>Patterns and implications of gene gain and loss in the evolution of Prochlorococcus.</title>
        <authorList>
            <person name="Kettler G.C."/>
            <person name="Martiny A.C."/>
            <person name="Huang K."/>
            <person name="Zucker J."/>
            <person name="Coleman M.L."/>
            <person name="Rodrigue S."/>
            <person name="Chen F."/>
            <person name="Lapidus A."/>
            <person name="Ferriera S."/>
            <person name="Johnson J."/>
            <person name="Steglich C."/>
            <person name="Church G.M."/>
            <person name="Richardson P."/>
            <person name="Chisholm S.W."/>
        </authorList>
    </citation>
    <scope>NUCLEOTIDE SEQUENCE [LARGE SCALE GENOMIC DNA]</scope>
    <source>
        <strain>MIT 9211</strain>
    </source>
</reference>